<evidence type="ECO:0000255" key="1">
    <source>
        <dbReference type="HAMAP-Rule" id="MF_01020"/>
    </source>
</evidence>
<dbReference type="EC" id="3.6.1.31" evidence="1"/>
<dbReference type="EMBL" id="CP000316">
    <property type="protein sequence ID" value="ABE42767.1"/>
    <property type="molecule type" value="Genomic_DNA"/>
</dbReference>
<dbReference type="RefSeq" id="WP_011481770.1">
    <property type="nucleotide sequence ID" value="NC_007948.1"/>
</dbReference>
<dbReference type="SMR" id="Q12FC5"/>
<dbReference type="STRING" id="296591.Bpro_0811"/>
<dbReference type="KEGG" id="pol:Bpro_0811"/>
<dbReference type="eggNOG" id="COG0140">
    <property type="taxonomic scope" value="Bacteria"/>
</dbReference>
<dbReference type="HOGENOM" id="CLU_123337_1_2_4"/>
<dbReference type="OrthoDB" id="9814738at2"/>
<dbReference type="UniPathway" id="UPA00031">
    <property type="reaction ID" value="UER00007"/>
</dbReference>
<dbReference type="Proteomes" id="UP000001983">
    <property type="component" value="Chromosome"/>
</dbReference>
<dbReference type="GO" id="GO:0005737">
    <property type="term" value="C:cytoplasm"/>
    <property type="evidence" value="ECO:0007669"/>
    <property type="project" value="UniProtKB-SubCell"/>
</dbReference>
<dbReference type="GO" id="GO:0005524">
    <property type="term" value="F:ATP binding"/>
    <property type="evidence" value="ECO:0007669"/>
    <property type="project" value="UniProtKB-KW"/>
</dbReference>
<dbReference type="GO" id="GO:0004636">
    <property type="term" value="F:phosphoribosyl-ATP diphosphatase activity"/>
    <property type="evidence" value="ECO:0007669"/>
    <property type="project" value="UniProtKB-UniRule"/>
</dbReference>
<dbReference type="GO" id="GO:0000105">
    <property type="term" value="P:L-histidine biosynthetic process"/>
    <property type="evidence" value="ECO:0007669"/>
    <property type="project" value="UniProtKB-UniRule"/>
</dbReference>
<dbReference type="CDD" id="cd11534">
    <property type="entry name" value="NTP-PPase_HisIE_like"/>
    <property type="match status" value="1"/>
</dbReference>
<dbReference type="Gene3D" id="1.10.287.1080">
    <property type="entry name" value="MazG-like"/>
    <property type="match status" value="1"/>
</dbReference>
<dbReference type="HAMAP" id="MF_01020">
    <property type="entry name" value="HisE"/>
    <property type="match status" value="1"/>
</dbReference>
<dbReference type="InterPro" id="IPR008179">
    <property type="entry name" value="HisE"/>
</dbReference>
<dbReference type="InterPro" id="IPR021130">
    <property type="entry name" value="PRib-ATP_PPHydrolase-like"/>
</dbReference>
<dbReference type="NCBIfam" id="TIGR03188">
    <property type="entry name" value="histidine_hisI"/>
    <property type="match status" value="1"/>
</dbReference>
<dbReference type="NCBIfam" id="NF001611">
    <property type="entry name" value="PRK00400.1-3"/>
    <property type="match status" value="1"/>
</dbReference>
<dbReference type="PANTHER" id="PTHR42945">
    <property type="entry name" value="HISTIDINE BIOSYNTHESIS BIFUNCTIONAL PROTEIN"/>
    <property type="match status" value="1"/>
</dbReference>
<dbReference type="PANTHER" id="PTHR42945:SF9">
    <property type="entry name" value="HISTIDINE BIOSYNTHESIS BIFUNCTIONAL PROTEIN HISIE"/>
    <property type="match status" value="1"/>
</dbReference>
<dbReference type="Pfam" id="PF01503">
    <property type="entry name" value="PRA-PH"/>
    <property type="match status" value="1"/>
</dbReference>
<dbReference type="SUPFAM" id="SSF101386">
    <property type="entry name" value="all-alpha NTP pyrophosphatases"/>
    <property type="match status" value="1"/>
</dbReference>
<name>HIS2_POLSJ</name>
<gene>
    <name evidence="1" type="primary">hisE</name>
    <name type="ordered locus">Bpro_0811</name>
</gene>
<feature type="chain" id="PRO_0000319658" description="Phosphoribosyl-ATP pyrophosphatase">
    <location>
        <begin position="1"/>
        <end position="127"/>
    </location>
</feature>
<accession>Q12FC5</accession>
<reference key="1">
    <citation type="journal article" date="2008" name="Appl. Environ. Microbiol.">
        <title>The genome of Polaromonas sp. strain JS666: insights into the evolution of a hydrocarbon- and xenobiotic-degrading bacterium, and features of relevance to biotechnology.</title>
        <authorList>
            <person name="Mattes T.E."/>
            <person name="Alexander A.K."/>
            <person name="Richardson P.M."/>
            <person name="Munk A.C."/>
            <person name="Han C.S."/>
            <person name="Stothard P."/>
            <person name="Coleman N.V."/>
        </authorList>
    </citation>
    <scope>NUCLEOTIDE SEQUENCE [LARGE SCALE GENOMIC DNA]</scope>
    <source>
        <strain>JS666 / ATCC BAA-500</strain>
    </source>
</reference>
<proteinExistence type="inferred from homology"/>
<organism>
    <name type="scientific">Polaromonas sp. (strain JS666 / ATCC BAA-500)</name>
    <dbReference type="NCBI Taxonomy" id="296591"/>
    <lineage>
        <taxon>Bacteria</taxon>
        <taxon>Pseudomonadati</taxon>
        <taxon>Pseudomonadota</taxon>
        <taxon>Betaproteobacteria</taxon>
        <taxon>Burkholderiales</taxon>
        <taxon>Comamonadaceae</taxon>
        <taxon>Polaromonas</taxon>
    </lineage>
</organism>
<protein>
    <recommendedName>
        <fullName evidence="1">Phosphoribosyl-ATP pyrophosphatase</fullName>
        <shortName evidence="1">PRA-PH</shortName>
        <ecNumber evidence="1">3.6.1.31</ecNumber>
    </recommendedName>
</protein>
<sequence length="127" mass="13800">MSSNDSLQRLAQIIESRKPANGGDPGTSYVARLLHRGPDAFLKKIGEEATETVMAAKDLDHGGPTPELRAKLVGEVADLWFHSLIALAHYGLQPADVIAELERREGTSGIEEKALRKVQNRDAAEKS</sequence>
<keyword id="KW-0028">Amino-acid biosynthesis</keyword>
<keyword id="KW-0067">ATP-binding</keyword>
<keyword id="KW-0963">Cytoplasm</keyword>
<keyword id="KW-0368">Histidine biosynthesis</keyword>
<keyword id="KW-0378">Hydrolase</keyword>
<keyword id="KW-0547">Nucleotide-binding</keyword>
<keyword id="KW-1185">Reference proteome</keyword>
<comment type="catalytic activity">
    <reaction evidence="1">
        <text>1-(5-phospho-beta-D-ribosyl)-ATP + H2O = 1-(5-phospho-beta-D-ribosyl)-5'-AMP + diphosphate + H(+)</text>
        <dbReference type="Rhea" id="RHEA:22828"/>
        <dbReference type="ChEBI" id="CHEBI:15377"/>
        <dbReference type="ChEBI" id="CHEBI:15378"/>
        <dbReference type="ChEBI" id="CHEBI:33019"/>
        <dbReference type="ChEBI" id="CHEBI:59457"/>
        <dbReference type="ChEBI" id="CHEBI:73183"/>
        <dbReference type="EC" id="3.6.1.31"/>
    </reaction>
</comment>
<comment type="pathway">
    <text evidence="1">Amino-acid biosynthesis; L-histidine biosynthesis; L-histidine from 5-phospho-alpha-D-ribose 1-diphosphate: step 2/9.</text>
</comment>
<comment type="subcellular location">
    <subcellularLocation>
        <location evidence="1">Cytoplasm</location>
    </subcellularLocation>
</comment>
<comment type="similarity">
    <text evidence="1">Belongs to the PRA-PH family.</text>
</comment>